<sequence length="335" mass="35891">MGNVSSAVKHCLSYETFLRDYPWLPRLLWEEKCSELPKLPVYVKIVEVGPRDGLQNEKEIVPTEVKIQLIDLLSQTGLPVIEATSFVSSKWVAQMADHTAVLKGIKRSPDVRYPVLTPNIQGFQAAVAAGANEVAVFGSASETFSRKNINCSIEESLQRFEQVVSAAKQEGIPVRGYVSCALGCPYEGQVKPSQVTKVAKRLFELGCYEVSLGDTIGVGTAGSMAEMLSDVLTEVPAGALAVHCHDTYGQALPNILIALQMGVSVVDASVAGLGGCPFAKGASGNVSTEDLLYMLHGLGIETGVDLLKVMEAGDFICKALNRKTNSKVSQATRNN</sequence>
<organism>
    <name type="scientific">Danio rerio</name>
    <name type="common">Zebrafish</name>
    <name type="synonym">Brachydanio rerio</name>
    <dbReference type="NCBI Taxonomy" id="7955"/>
    <lineage>
        <taxon>Eukaryota</taxon>
        <taxon>Metazoa</taxon>
        <taxon>Chordata</taxon>
        <taxon>Craniata</taxon>
        <taxon>Vertebrata</taxon>
        <taxon>Euteleostomi</taxon>
        <taxon>Actinopterygii</taxon>
        <taxon>Neopterygii</taxon>
        <taxon>Teleostei</taxon>
        <taxon>Ostariophysi</taxon>
        <taxon>Cypriniformes</taxon>
        <taxon>Danionidae</taxon>
        <taxon>Danioninae</taxon>
        <taxon>Danio</taxon>
    </lineage>
</organism>
<feature type="initiator methionine" description="Removed" evidence="1">
    <location>
        <position position="1"/>
    </location>
</feature>
<feature type="chain" id="PRO_0000334671" description="3-hydroxy-3-methylglutaryl-CoA lyase, cytoplasmic">
    <location>
        <begin position="2"/>
        <end position="335"/>
    </location>
</feature>
<feature type="domain" description="Pyruvate carboxyltransferase" evidence="2">
    <location>
        <begin position="43"/>
        <end position="310"/>
    </location>
</feature>
<feature type="active site" evidence="1">
    <location>
        <position position="276"/>
    </location>
</feature>
<feature type="binding site" evidence="1">
    <location>
        <position position="51"/>
    </location>
    <ligand>
        <name>substrate</name>
    </ligand>
</feature>
<feature type="binding site" evidence="1">
    <location>
        <position position="52"/>
    </location>
    <ligand>
        <name>a divalent metal cation</name>
        <dbReference type="ChEBI" id="CHEBI:60240"/>
    </ligand>
</feature>
<feature type="binding site" evidence="1">
    <location>
        <position position="243"/>
    </location>
    <ligand>
        <name>a divalent metal cation</name>
        <dbReference type="ChEBI" id="CHEBI:60240"/>
    </ligand>
</feature>
<feature type="binding site" evidence="1">
    <location>
        <position position="245"/>
    </location>
    <ligand>
        <name>a divalent metal cation</name>
        <dbReference type="ChEBI" id="CHEBI:60240"/>
    </ligand>
</feature>
<feature type="binding site" evidence="1">
    <location>
        <position position="285"/>
    </location>
    <ligand>
        <name>a divalent metal cation</name>
        <dbReference type="ChEBI" id="CHEBI:60240"/>
    </ligand>
</feature>
<feature type="modified residue" description="N6-acetyllysine" evidence="1">
    <location>
        <position position="58"/>
    </location>
</feature>
<feature type="lipid moiety-binding region" description="N-myristoyl glycine" evidence="1">
    <location>
        <position position="2"/>
    </location>
</feature>
<dbReference type="EC" id="4.1.3.4"/>
<dbReference type="EMBL" id="BC154587">
    <property type="protein sequence ID" value="AAI54588.1"/>
    <property type="molecule type" value="mRNA"/>
</dbReference>
<dbReference type="RefSeq" id="NP_001103870.1">
    <property type="nucleotide sequence ID" value="NM_001110400.1"/>
</dbReference>
<dbReference type="SMR" id="A8WG57"/>
<dbReference type="FunCoup" id="A8WG57">
    <property type="interactions" value="1217"/>
</dbReference>
<dbReference type="STRING" id="7955.ENSDARP00000133158"/>
<dbReference type="PaxDb" id="7955-ENSDARP00000105104"/>
<dbReference type="Ensembl" id="ENSDART00000164764">
    <property type="protein sequence ID" value="ENSDARP00000133158"/>
    <property type="gene ID" value="ENSDARG00000088740"/>
</dbReference>
<dbReference type="GeneID" id="571388"/>
<dbReference type="KEGG" id="dre:571388"/>
<dbReference type="AGR" id="ZFIN:ZDB-GENE-080220-15"/>
<dbReference type="CTD" id="54511"/>
<dbReference type="ZFIN" id="ZDB-GENE-080220-15">
    <property type="gene designation" value="hmgcll1"/>
</dbReference>
<dbReference type="eggNOG" id="KOG2368">
    <property type="taxonomic scope" value="Eukaryota"/>
</dbReference>
<dbReference type="InParanoid" id="A8WG57"/>
<dbReference type="OMA" id="CECKHIL"/>
<dbReference type="OrthoDB" id="1905920at2759"/>
<dbReference type="PhylomeDB" id="A8WG57"/>
<dbReference type="Reactome" id="R-DRE-77111">
    <property type="pathway name" value="Synthesis of Ketone Bodies"/>
</dbReference>
<dbReference type="UniPathway" id="UPA00896">
    <property type="reaction ID" value="UER00863"/>
</dbReference>
<dbReference type="PRO" id="PR:A8WG57"/>
<dbReference type="Proteomes" id="UP000000437">
    <property type="component" value="Chromosome 13"/>
</dbReference>
<dbReference type="Bgee" id="ENSDARG00000088740">
    <property type="expression patterns" value="Expressed in mature ovarian follicle and 8 other cell types or tissues"/>
</dbReference>
<dbReference type="ExpressionAtlas" id="A8WG57">
    <property type="expression patterns" value="baseline"/>
</dbReference>
<dbReference type="GO" id="GO:0005829">
    <property type="term" value="C:cytosol"/>
    <property type="evidence" value="ECO:0000250"/>
    <property type="project" value="UniProtKB"/>
</dbReference>
<dbReference type="GO" id="GO:0005783">
    <property type="term" value="C:endoplasmic reticulum"/>
    <property type="evidence" value="ECO:0000250"/>
    <property type="project" value="UniProtKB"/>
</dbReference>
<dbReference type="GO" id="GO:0005789">
    <property type="term" value="C:endoplasmic reticulum membrane"/>
    <property type="evidence" value="ECO:0007669"/>
    <property type="project" value="UniProtKB-SubCell"/>
</dbReference>
<dbReference type="GO" id="GO:0016020">
    <property type="term" value="C:membrane"/>
    <property type="evidence" value="ECO:0000250"/>
    <property type="project" value="UniProtKB"/>
</dbReference>
<dbReference type="GO" id="GO:0048471">
    <property type="term" value="C:perinuclear region of cytoplasm"/>
    <property type="evidence" value="ECO:0000250"/>
    <property type="project" value="UniProtKB"/>
</dbReference>
<dbReference type="GO" id="GO:0004419">
    <property type="term" value="F:hydroxymethylglutaryl-CoA lyase activity"/>
    <property type="evidence" value="ECO:0000250"/>
    <property type="project" value="UniProtKB"/>
</dbReference>
<dbReference type="GO" id="GO:0046872">
    <property type="term" value="F:metal ion binding"/>
    <property type="evidence" value="ECO:0000250"/>
    <property type="project" value="UniProtKB"/>
</dbReference>
<dbReference type="GO" id="GO:0046951">
    <property type="term" value="P:ketone body biosynthetic process"/>
    <property type="evidence" value="ECO:0000250"/>
    <property type="project" value="UniProtKB"/>
</dbReference>
<dbReference type="GO" id="GO:0006552">
    <property type="term" value="P:L-leucine catabolic process"/>
    <property type="evidence" value="ECO:0000318"/>
    <property type="project" value="GO_Central"/>
</dbReference>
<dbReference type="CDD" id="cd07938">
    <property type="entry name" value="DRE_TIM_HMGL"/>
    <property type="match status" value="1"/>
</dbReference>
<dbReference type="FunFam" id="3.20.20.70:FF:000038">
    <property type="entry name" value="Hydroxymethylglutaryl-CoA lyase, mitochondrial"/>
    <property type="match status" value="1"/>
</dbReference>
<dbReference type="Gene3D" id="3.20.20.70">
    <property type="entry name" value="Aldolase class I"/>
    <property type="match status" value="1"/>
</dbReference>
<dbReference type="InterPro" id="IPR013785">
    <property type="entry name" value="Aldolase_TIM"/>
</dbReference>
<dbReference type="InterPro" id="IPR043594">
    <property type="entry name" value="HMGL"/>
</dbReference>
<dbReference type="InterPro" id="IPR000891">
    <property type="entry name" value="PYR_CT"/>
</dbReference>
<dbReference type="NCBIfam" id="NF004283">
    <property type="entry name" value="PRK05692.1"/>
    <property type="match status" value="1"/>
</dbReference>
<dbReference type="PANTHER" id="PTHR42738:SF16">
    <property type="entry name" value="3-HYDROXY-3-METHYLGLUTARYL-COA LYASE, CYTOPLASMIC"/>
    <property type="match status" value="1"/>
</dbReference>
<dbReference type="PANTHER" id="PTHR42738">
    <property type="entry name" value="HYDROXYMETHYLGLUTARYL-COA LYASE"/>
    <property type="match status" value="1"/>
</dbReference>
<dbReference type="Pfam" id="PF00682">
    <property type="entry name" value="HMGL-like"/>
    <property type="match status" value="1"/>
</dbReference>
<dbReference type="SUPFAM" id="SSF51569">
    <property type="entry name" value="Aldolase"/>
    <property type="match status" value="1"/>
</dbReference>
<dbReference type="PROSITE" id="PS50991">
    <property type="entry name" value="PYR_CT"/>
    <property type="match status" value="1"/>
</dbReference>
<accession>A8WG57</accession>
<comment type="function">
    <text evidence="1">Non-mitochondrial 3-hydroxy-3-methylglutaryl-CoA lyase that catalyzes a cation-dependent cleavage of (S)-3-hydroxy-3-methylglutaryl-CoA into acetyl-CoA and acetoacetate, a key step in ketogenesis, the products of which support energy production in nonhepatic animal tissues.</text>
</comment>
<comment type="catalytic activity">
    <reaction>
        <text>(3S)-3-hydroxy-3-methylglutaryl-CoA = acetoacetate + acetyl-CoA</text>
        <dbReference type="Rhea" id="RHEA:24404"/>
        <dbReference type="ChEBI" id="CHEBI:13705"/>
        <dbReference type="ChEBI" id="CHEBI:43074"/>
        <dbReference type="ChEBI" id="CHEBI:57288"/>
        <dbReference type="EC" id="4.1.3.4"/>
    </reaction>
</comment>
<comment type="cofactor">
    <cofactor evidence="1">
        <name>a divalent metal cation</name>
        <dbReference type="ChEBI" id="CHEBI:60240"/>
    </cofactor>
</comment>
<comment type="pathway">
    <text>Metabolic intermediate metabolism; (S)-3-hydroxy-3-methylglutaryl-CoA degradation; acetoacetate from (S)-3-hydroxy-3-methylglutaryl-CoA: step 1/1.</text>
</comment>
<comment type="subcellular location">
    <subcellularLocation>
        <location evidence="1">Cytoplasm</location>
        <location evidence="1">Cytosol</location>
    </subcellularLocation>
    <subcellularLocation>
        <location evidence="1">Endoplasmic reticulum membrane</location>
        <topology evidence="1">Peripheral membrane protein</topology>
    </subcellularLocation>
</comment>
<comment type="similarity">
    <text evidence="3">Belongs to the HMG-CoA lyase family.</text>
</comment>
<name>HMGC2_DANRE</name>
<evidence type="ECO:0000250" key="1"/>
<evidence type="ECO:0000255" key="2">
    <source>
        <dbReference type="PROSITE-ProRule" id="PRU01151"/>
    </source>
</evidence>
<evidence type="ECO:0000305" key="3"/>
<keyword id="KW-0007">Acetylation</keyword>
<keyword id="KW-0963">Cytoplasm</keyword>
<keyword id="KW-0256">Endoplasmic reticulum</keyword>
<keyword id="KW-0443">Lipid metabolism</keyword>
<keyword id="KW-0449">Lipoprotein</keyword>
<keyword id="KW-0456">Lyase</keyword>
<keyword id="KW-0472">Membrane</keyword>
<keyword id="KW-0479">Metal-binding</keyword>
<keyword id="KW-0519">Myristate</keyword>
<keyword id="KW-1185">Reference proteome</keyword>
<proteinExistence type="evidence at transcript level"/>
<protein>
    <recommendedName>
        <fullName>3-hydroxy-3-methylglutaryl-CoA lyase, cytoplasmic</fullName>
        <ecNumber>4.1.3.4</ecNumber>
    </recommendedName>
    <alternativeName>
        <fullName>3-hydroxy-3-methylglutaryl-CoA lyase-like protein 1</fullName>
    </alternativeName>
</protein>
<reference key="1">
    <citation type="submission" date="2007-11" db="EMBL/GenBank/DDBJ databases">
        <authorList>
            <consortium name="NIH - Zebrafish Gene Collection (ZGC) project"/>
        </authorList>
    </citation>
    <scope>NUCLEOTIDE SEQUENCE [LARGE SCALE MRNA]</scope>
    <source>
        <strain>AB</strain>
        <tissue>Ovary</tissue>
    </source>
</reference>
<gene>
    <name type="primary">hmgcll1</name>
    <name type="ORF">zgc:172206</name>
</gene>